<feature type="chain" id="PRO_1000048707" description="Chromosomal replication initiator protein DnaA">
    <location>
        <begin position="1"/>
        <end position="455"/>
    </location>
</feature>
<feature type="region of interest" description="Domain I, interacts with DnaA modulators" evidence="1">
    <location>
        <begin position="1"/>
        <end position="70"/>
    </location>
</feature>
<feature type="region of interest" description="Domain II" evidence="1">
    <location>
        <begin position="70"/>
        <end position="113"/>
    </location>
</feature>
<feature type="region of interest" description="Disordered" evidence="2">
    <location>
        <begin position="87"/>
        <end position="109"/>
    </location>
</feature>
<feature type="region of interest" description="Domain III, AAA+ region" evidence="1">
    <location>
        <begin position="114"/>
        <end position="335"/>
    </location>
</feature>
<feature type="region of interest" description="Domain IV, binds dsDNA" evidence="1">
    <location>
        <begin position="336"/>
        <end position="455"/>
    </location>
</feature>
<feature type="compositionally biased region" description="Low complexity" evidence="2">
    <location>
        <begin position="91"/>
        <end position="102"/>
    </location>
</feature>
<feature type="binding site" evidence="1">
    <location>
        <position position="158"/>
    </location>
    <ligand>
        <name>ATP</name>
        <dbReference type="ChEBI" id="CHEBI:30616"/>
    </ligand>
</feature>
<feature type="binding site" evidence="1">
    <location>
        <position position="160"/>
    </location>
    <ligand>
        <name>ATP</name>
        <dbReference type="ChEBI" id="CHEBI:30616"/>
    </ligand>
</feature>
<feature type="binding site" evidence="1">
    <location>
        <position position="161"/>
    </location>
    <ligand>
        <name>ATP</name>
        <dbReference type="ChEBI" id="CHEBI:30616"/>
    </ligand>
</feature>
<feature type="binding site" evidence="1">
    <location>
        <position position="162"/>
    </location>
    <ligand>
        <name>ATP</name>
        <dbReference type="ChEBI" id="CHEBI:30616"/>
    </ligand>
</feature>
<sequence length="455" mass="51581">MTNETWVQVREGLLKRVGRNNFVTWIEPLRLMGLDEGVARFEVPTLFFGDWVQRNFADHIRMRLTEAGSPVERLEFAVSNTPRAPLKEVKAAAPAASPARARPAPPEEDLRGAPLDARFTFDSFVVGKPNELAHAAARRVAEGGPVTFNPLFLYGGVGLGKTHLMHAIAHDLQKRQPGARVLYLSAEQFMYRFVQALREREILGFKELFRSVDVLMVDDVQFIAGKDSTQEEFFHTFNALVDQNKQIVISADRAPGEIKDLEERIKSRLQCGLVVDLHPTDYELRLGILQQKADFYREQYRGLVIADGVLEFLAHRITTNVRVLEGALTRLFAFASLVGREITLDLAQDCLADILRASDRKVTIEEIQRKVAEHYNIRLSDMIGPKRLRTIARPRQVAMYLAKQLTPRSLPEIGRRFGGRDHTTIMHGVRKIEELMATDSQLADDLQLLRRLLQA</sequence>
<gene>
    <name evidence="1" type="primary">dnaA</name>
    <name type="ordered locus">RHOS4_29550</name>
    <name type="ORF">RSP_1342</name>
</gene>
<protein>
    <recommendedName>
        <fullName evidence="1">Chromosomal replication initiator protein DnaA</fullName>
    </recommendedName>
</protein>
<accession>Q3IY61</accession>
<name>DNAA_CERS4</name>
<dbReference type="EMBL" id="CP000143">
    <property type="protein sequence ID" value="ABA80523.1"/>
    <property type="molecule type" value="Genomic_DNA"/>
</dbReference>
<dbReference type="RefSeq" id="WP_002721917.1">
    <property type="nucleotide sequence ID" value="NZ_CP030271.1"/>
</dbReference>
<dbReference type="RefSeq" id="YP_354424.1">
    <property type="nucleotide sequence ID" value="NC_007493.2"/>
</dbReference>
<dbReference type="SMR" id="Q3IY61"/>
<dbReference type="STRING" id="272943.RSP_1342"/>
<dbReference type="EnsemblBacteria" id="ABA80523">
    <property type="protein sequence ID" value="ABA80523"/>
    <property type="gene ID" value="RSP_1342"/>
</dbReference>
<dbReference type="GeneID" id="67448113"/>
<dbReference type="KEGG" id="rsp:RSP_1342"/>
<dbReference type="PATRIC" id="fig|272943.9.peg.3325"/>
<dbReference type="eggNOG" id="COG0593">
    <property type="taxonomic scope" value="Bacteria"/>
</dbReference>
<dbReference type="OrthoDB" id="9807019at2"/>
<dbReference type="PhylomeDB" id="Q3IY61"/>
<dbReference type="Proteomes" id="UP000002703">
    <property type="component" value="Chromosome 1"/>
</dbReference>
<dbReference type="GO" id="GO:0005737">
    <property type="term" value="C:cytoplasm"/>
    <property type="evidence" value="ECO:0007669"/>
    <property type="project" value="UniProtKB-SubCell"/>
</dbReference>
<dbReference type="GO" id="GO:0005886">
    <property type="term" value="C:plasma membrane"/>
    <property type="evidence" value="ECO:0007669"/>
    <property type="project" value="TreeGrafter"/>
</dbReference>
<dbReference type="GO" id="GO:0005524">
    <property type="term" value="F:ATP binding"/>
    <property type="evidence" value="ECO:0007669"/>
    <property type="project" value="UniProtKB-UniRule"/>
</dbReference>
<dbReference type="GO" id="GO:0016887">
    <property type="term" value="F:ATP hydrolysis activity"/>
    <property type="evidence" value="ECO:0007669"/>
    <property type="project" value="InterPro"/>
</dbReference>
<dbReference type="GO" id="GO:0003688">
    <property type="term" value="F:DNA replication origin binding"/>
    <property type="evidence" value="ECO:0007669"/>
    <property type="project" value="UniProtKB-UniRule"/>
</dbReference>
<dbReference type="GO" id="GO:0008289">
    <property type="term" value="F:lipid binding"/>
    <property type="evidence" value="ECO:0007669"/>
    <property type="project" value="UniProtKB-KW"/>
</dbReference>
<dbReference type="GO" id="GO:0006270">
    <property type="term" value="P:DNA replication initiation"/>
    <property type="evidence" value="ECO:0007669"/>
    <property type="project" value="UniProtKB-UniRule"/>
</dbReference>
<dbReference type="GO" id="GO:0006275">
    <property type="term" value="P:regulation of DNA replication"/>
    <property type="evidence" value="ECO:0007669"/>
    <property type="project" value="UniProtKB-UniRule"/>
</dbReference>
<dbReference type="CDD" id="cd00009">
    <property type="entry name" value="AAA"/>
    <property type="match status" value="1"/>
</dbReference>
<dbReference type="CDD" id="cd06571">
    <property type="entry name" value="Bac_DnaA_C"/>
    <property type="match status" value="1"/>
</dbReference>
<dbReference type="FunFam" id="3.40.50.300:FF:000668">
    <property type="entry name" value="Chromosomal replication initiator protein DnaA"/>
    <property type="match status" value="1"/>
</dbReference>
<dbReference type="Gene3D" id="1.10.1750.10">
    <property type="match status" value="1"/>
</dbReference>
<dbReference type="Gene3D" id="1.10.8.60">
    <property type="match status" value="1"/>
</dbReference>
<dbReference type="Gene3D" id="3.30.300.180">
    <property type="match status" value="1"/>
</dbReference>
<dbReference type="Gene3D" id="3.40.50.300">
    <property type="entry name" value="P-loop containing nucleotide triphosphate hydrolases"/>
    <property type="match status" value="1"/>
</dbReference>
<dbReference type="HAMAP" id="MF_00377">
    <property type="entry name" value="DnaA_bact"/>
    <property type="match status" value="1"/>
</dbReference>
<dbReference type="InterPro" id="IPR003593">
    <property type="entry name" value="AAA+_ATPase"/>
</dbReference>
<dbReference type="InterPro" id="IPR001957">
    <property type="entry name" value="Chromosome_initiator_DnaA"/>
</dbReference>
<dbReference type="InterPro" id="IPR020591">
    <property type="entry name" value="Chromosome_initiator_DnaA-like"/>
</dbReference>
<dbReference type="InterPro" id="IPR018312">
    <property type="entry name" value="Chromosome_initiator_DnaA_CS"/>
</dbReference>
<dbReference type="InterPro" id="IPR013159">
    <property type="entry name" value="DnaA_C"/>
</dbReference>
<dbReference type="InterPro" id="IPR013317">
    <property type="entry name" value="DnaA_dom"/>
</dbReference>
<dbReference type="InterPro" id="IPR024633">
    <property type="entry name" value="DnaA_N_dom"/>
</dbReference>
<dbReference type="InterPro" id="IPR038454">
    <property type="entry name" value="DnaA_N_sf"/>
</dbReference>
<dbReference type="InterPro" id="IPR027417">
    <property type="entry name" value="P-loop_NTPase"/>
</dbReference>
<dbReference type="InterPro" id="IPR010921">
    <property type="entry name" value="Trp_repressor/repl_initiator"/>
</dbReference>
<dbReference type="NCBIfam" id="TIGR00362">
    <property type="entry name" value="DnaA"/>
    <property type="match status" value="1"/>
</dbReference>
<dbReference type="PANTHER" id="PTHR30050">
    <property type="entry name" value="CHROMOSOMAL REPLICATION INITIATOR PROTEIN DNAA"/>
    <property type="match status" value="1"/>
</dbReference>
<dbReference type="PANTHER" id="PTHR30050:SF2">
    <property type="entry name" value="CHROMOSOMAL REPLICATION INITIATOR PROTEIN DNAA"/>
    <property type="match status" value="1"/>
</dbReference>
<dbReference type="Pfam" id="PF00308">
    <property type="entry name" value="Bac_DnaA"/>
    <property type="match status" value="1"/>
</dbReference>
<dbReference type="Pfam" id="PF08299">
    <property type="entry name" value="Bac_DnaA_C"/>
    <property type="match status" value="1"/>
</dbReference>
<dbReference type="Pfam" id="PF11638">
    <property type="entry name" value="DnaA_N"/>
    <property type="match status" value="1"/>
</dbReference>
<dbReference type="PRINTS" id="PR00051">
    <property type="entry name" value="DNAA"/>
</dbReference>
<dbReference type="SMART" id="SM00382">
    <property type="entry name" value="AAA"/>
    <property type="match status" value="1"/>
</dbReference>
<dbReference type="SMART" id="SM00760">
    <property type="entry name" value="Bac_DnaA_C"/>
    <property type="match status" value="1"/>
</dbReference>
<dbReference type="SUPFAM" id="SSF52540">
    <property type="entry name" value="P-loop containing nucleoside triphosphate hydrolases"/>
    <property type="match status" value="1"/>
</dbReference>
<dbReference type="SUPFAM" id="SSF48295">
    <property type="entry name" value="TrpR-like"/>
    <property type="match status" value="1"/>
</dbReference>
<dbReference type="PROSITE" id="PS01008">
    <property type="entry name" value="DNAA"/>
    <property type="match status" value="1"/>
</dbReference>
<reference key="1">
    <citation type="submission" date="2005-09" db="EMBL/GenBank/DDBJ databases">
        <title>Complete sequence of chromosome 1 of Rhodobacter sphaeroides 2.4.1.</title>
        <authorList>
            <person name="Copeland A."/>
            <person name="Lucas S."/>
            <person name="Lapidus A."/>
            <person name="Barry K."/>
            <person name="Detter J.C."/>
            <person name="Glavina T."/>
            <person name="Hammon N."/>
            <person name="Israni S."/>
            <person name="Pitluck S."/>
            <person name="Richardson P."/>
            <person name="Mackenzie C."/>
            <person name="Choudhary M."/>
            <person name="Larimer F."/>
            <person name="Hauser L.J."/>
            <person name="Land M."/>
            <person name="Donohue T.J."/>
            <person name="Kaplan S."/>
        </authorList>
    </citation>
    <scope>NUCLEOTIDE SEQUENCE [LARGE SCALE GENOMIC DNA]</scope>
    <source>
        <strain>ATCC 17023 / DSM 158 / JCM 6121 / CCUG 31486 / LMG 2827 / NBRC 12203 / NCIMB 8253 / ATH 2.4.1.</strain>
    </source>
</reference>
<organism>
    <name type="scientific">Cereibacter sphaeroides (strain ATCC 17023 / DSM 158 / JCM 6121 / CCUG 31486 / LMG 2827 / NBRC 12203 / NCIMB 8253 / ATH 2.4.1.)</name>
    <name type="common">Rhodobacter sphaeroides</name>
    <dbReference type="NCBI Taxonomy" id="272943"/>
    <lineage>
        <taxon>Bacteria</taxon>
        <taxon>Pseudomonadati</taxon>
        <taxon>Pseudomonadota</taxon>
        <taxon>Alphaproteobacteria</taxon>
        <taxon>Rhodobacterales</taxon>
        <taxon>Paracoccaceae</taxon>
        <taxon>Cereibacter</taxon>
    </lineage>
</organism>
<keyword id="KW-0067">ATP-binding</keyword>
<keyword id="KW-0963">Cytoplasm</keyword>
<keyword id="KW-0235">DNA replication</keyword>
<keyword id="KW-0238">DNA-binding</keyword>
<keyword id="KW-0446">Lipid-binding</keyword>
<keyword id="KW-0547">Nucleotide-binding</keyword>
<keyword id="KW-1185">Reference proteome</keyword>
<comment type="function">
    <text evidence="1">Plays an essential role in the initiation and regulation of chromosomal replication. ATP-DnaA binds to the origin of replication (oriC) to initiate formation of the DNA replication initiation complex once per cell cycle. Binds the DnaA box (a 9 base pair repeat at the origin) and separates the double-stranded (ds)DNA. Forms a right-handed helical filament on oriC DNA; dsDNA binds to the exterior of the filament while single-stranded (ss)DNA is stabiized in the filament's interior. The ATP-DnaA-oriC complex binds and stabilizes one strand of the AT-rich DNA unwinding element (DUE), permitting loading of DNA polymerase. After initiation quickly degrades to an ADP-DnaA complex that is not apt for DNA replication. Binds acidic phospholipids.</text>
</comment>
<comment type="subunit">
    <text evidence="1">Oligomerizes as a right-handed, spiral filament on DNA at oriC.</text>
</comment>
<comment type="subcellular location">
    <subcellularLocation>
        <location evidence="1">Cytoplasm</location>
    </subcellularLocation>
</comment>
<comment type="domain">
    <text evidence="1">Domain I is involved in oligomerization and binding regulators, domain II is flexibile and of varying length in different bacteria, domain III forms the AAA+ region, while domain IV binds dsDNA.</text>
</comment>
<comment type="similarity">
    <text evidence="1">Belongs to the DnaA family.</text>
</comment>
<proteinExistence type="inferred from homology"/>
<evidence type="ECO:0000255" key="1">
    <source>
        <dbReference type="HAMAP-Rule" id="MF_00377"/>
    </source>
</evidence>
<evidence type="ECO:0000256" key="2">
    <source>
        <dbReference type="SAM" id="MobiDB-lite"/>
    </source>
</evidence>